<name>GLNA_SUIBO</name>
<protein>
    <recommendedName>
        <fullName>Glutamine synthetase</fullName>
        <shortName>GS</shortName>
        <ecNumber>6.3.1.2</ecNumber>
    </recommendedName>
    <alternativeName>
        <fullName>Glutamate--ammonia ligase</fullName>
    </alternativeName>
</protein>
<reference key="1">
    <citation type="submission" date="2002-09" db="EMBL/GenBank/DDBJ databases">
        <title>Glutamine synthetase gene and its transcription in the ectomycorrhizal basidiomycete Suillus bovinus.</title>
        <authorList>
            <person name="Jokela S."/>
            <person name="Paulin L."/>
            <person name="Sen R."/>
            <person name="Juuti J.T."/>
        </authorList>
    </citation>
    <scope>NUCLEOTIDE SEQUENCE [GENOMIC DNA]</scope>
    <source>
        <strain>SBH1</strain>
    </source>
</reference>
<organism>
    <name type="scientific">Suillus bovinus</name>
    <name type="common">Jersey cow bolete</name>
    <name type="synonym">Boletus bovinus</name>
    <dbReference type="NCBI Taxonomy" id="48563"/>
    <lineage>
        <taxon>Eukaryota</taxon>
        <taxon>Fungi</taxon>
        <taxon>Dikarya</taxon>
        <taxon>Basidiomycota</taxon>
        <taxon>Agaricomycotina</taxon>
        <taxon>Agaricomycetes</taxon>
        <taxon>Agaricomycetidae</taxon>
        <taxon>Boletales</taxon>
        <taxon>Suillineae</taxon>
        <taxon>Suillaceae</taxon>
        <taxon>Suillus</taxon>
    </lineage>
</organism>
<feature type="chain" id="PRO_0000153163" description="Glutamine synthetase">
    <location>
        <begin position="1"/>
        <end position="354"/>
    </location>
</feature>
<feature type="domain" description="GS beta-grasp" evidence="2">
    <location>
        <begin position="22"/>
        <end position="101"/>
    </location>
</feature>
<feature type="domain" description="GS catalytic" evidence="3">
    <location>
        <begin position="108"/>
        <end position="354"/>
    </location>
</feature>
<keyword id="KW-0067">ATP-binding</keyword>
<keyword id="KW-0963">Cytoplasm</keyword>
<keyword id="KW-0436">Ligase</keyword>
<keyword id="KW-0547">Nucleotide-binding</keyword>
<gene>
    <name type="primary">GLNA</name>
</gene>
<accession>Q8J1R3</accession>
<comment type="catalytic activity">
    <reaction>
        <text>L-glutamate + NH4(+) + ATP = L-glutamine + ADP + phosphate + H(+)</text>
        <dbReference type="Rhea" id="RHEA:16169"/>
        <dbReference type="ChEBI" id="CHEBI:15378"/>
        <dbReference type="ChEBI" id="CHEBI:28938"/>
        <dbReference type="ChEBI" id="CHEBI:29985"/>
        <dbReference type="ChEBI" id="CHEBI:30616"/>
        <dbReference type="ChEBI" id="CHEBI:43474"/>
        <dbReference type="ChEBI" id="CHEBI:58359"/>
        <dbReference type="ChEBI" id="CHEBI:456216"/>
        <dbReference type="EC" id="6.3.1.2"/>
    </reaction>
</comment>
<comment type="subunit">
    <text evidence="1">Homooctamer.</text>
</comment>
<comment type="subcellular location">
    <subcellularLocation>
        <location evidence="1">Cytoplasm</location>
    </subcellularLocation>
</comment>
<comment type="similarity">
    <text evidence="4">Belongs to the glutamine synthetase family.</text>
</comment>
<sequence>MAYQYHNDLLAPYLALSQGDKVQAEYVWIDGDGGLRSKTMTMTKKTTDIGQLRIWDFDGSSTNQAPGGDSDVYLRPAAIFKDPFRGGDNILVLAETFNNDGTPNRTNHRHHTKKVMDLAKDSVPWFGLEQEYTLFDADGTPFGWPKGGFPGPQGPYYCGAGTGKVFARDLIEAHYRACLYAGVNISGINAEVMPSQWEFQVGPCEGISMGDHLWMARYLLVRIAEQWGIKVSFHPKPLAGDWNGAGCHTNYSTKVMREPGGMKYIDEAIEKLSKRHAEHIAVYGEDNDLRLTGRHETGHIGDFSSGVANRGASIRVPRHVAAQGYGYLEDRRPASNIDPYRVTGIIVETTVLDK</sequence>
<dbReference type="EC" id="6.3.1.2"/>
<dbReference type="EMBL" id="AJ509092">
    <property type="protein sequence ID" value="CAD48934.1"/>
    <property type="molecule type" value="Genomic_DNA"/>
</dbReference>
<dbReference type="SMR" id="Q8J1R3"/>
<dbReference type="GO" id="GO:0005737">
    <property type="term" value="C:cytoplasm"/>
    <property type="evidence" value="ECO:0007669"/>
    <property type="project" value="UniProtKB-SubCell"/>
</dbReference>
<dbReference type="GO" id="GO:0005524">
    <property type="term" value="F:ATP binding"/>
    <property type="evidence" value="ECO:0007669"/>
    <property type="project" value="UniProtKB-KW"/>
</dbReference>
<dbReference type="GO" id="GO:0004356">
    <property type="term" value="F:glutamine synthetase activity"/>
    <property type="evidence" value="ECO:0007669"/>
    <property type="project" value="UniProtKB-EC"/>
</dbReference>
<dbReference type="GO" id="GO:0006542">
    <property type="term" value="P:glutamine biosynthetic process"/>
    <property type="evidence" value="ECO:0007669"/>
    <property type="project" value="InterPro"/>
</dbReference>
<dbReference type="FunFam" id="3.10.20.70:FF:000004">
    <property type="entry name" value="Glutamine synthetase"/>
    <property type="match status" value="1"/>
</dbReference>
<dbReference type="FunFam" id="3.30.590.10:FF:000004">
    <property type="entry name" value="Glutamine synthetase"/>
    <property type="match status" value="1"/>
</dbReference>
<dbReference type="Gene3D" id="3.10.20.70">
    <property type="entry name" value="Glutamine synthetase, N-terminal domain"/>
    <property type="match status" value="1"/>
</dbReference>
<dbReference type="Gene3D" id="3.30.590.10">
    <property type="entry name" value="Glutamine synthetase/guanido kinase, catalytic domain"/>
    <property type="match status" value="2"/>
</dbReference>
<dbReference type="InterPro" id="IPR008147">
    <property type="entry name" value="Gln_synt_N"/>
</dbReference>
<dbReference type="InterPro" id="IPR036651">
    <property type="entry name" value="Gln_synt_N_sf"/>
</dbReference>
<dbReference type="InterPro" id="IPR014746">
    <property type="entry name" value="Gln_synth/guanido_kin_cat_dom"/>
</dbReference>
<dbReference type="InterPro" id="IPR008146">
    <property type="entry name" value="Gln_synth_cat_dom"/>
</dbReference>
<dbReference type="InterPro" id="IPR027303">
    <property type="entry name" value="Gln_synth_gly_rich_site"/>
</dbReference>
<dbReference type="InterPro" id="IPR027302">
    <property type="entry name" value="Gln_synth_N_conserv_site"/>
</dbReference>
<dbReference type="InterPro" id="IPR050292">
    <property type="entry name" value="Glutamine_Synthetase"/>
</dbReference>
<dbReference type="PANTHER" id="PTHR20852">
    <property type="entry name" value="GLUTAMINE SYNTHETASE"/>
    <property type="match status" value="1"/>
</dbReference>
<dbReference type="PANTHER" id="PTHR20852:SF57">
    <property type="entry name" value="GLUTAMINE SYNTHETASE 2 CYTOPLASMIC"/>
    <property type="match status" value="1"/>
</dbReference>
<dbReference type="Pfam" id="PF00120">
    <property type="entry name" value="Gln-synt_C"/>
    <property type="match status" value="1"/>
</dbReference>
<dbReference type="Pfam" id="PF03951">
    <property type="entry name" value="Gln-synt_N"/>
    <property type="match status" value="1"/>
</dbReference>
<dbReference type="SMART" id="SM01230">
    <property type="entry name" value="Gln-synt_C"/>
    <property type="match status" value="1"/>
</dbReference>
<dbReference type="SUPFAM" id="SSF54368">
    <property type="entry name" value="Glutamine synthetase, N-terminal domain"/>
    <property type="match status" value="1"/>
</dbReference>
<dbReference type="SUPFAM" id="SSF55931">
    <property type="entry name" value="Glutamine synthetase/guanido kinase"/>
    <property type="match status" value="1"/>
</dbReference>
<dbReference type="PROSITE" id="PS00180">
    <property type="entry name" value="GLNA_1"/>
    <property type="match status" value="1"/>
</dbReference>
<dbReference type="PROSITE" id="PS00181">
    <property type="entry name" value="GLNA_ATP"/>
    <property type="match status" value="1"/>
</dbReference>
<dbReference type="PROSITE" id="PS51986">
    <property type="entry name" value="GS_BETA_GRASP"/>
    <property type="match status" value="1"/>
</dbReference>
<dbReference type="PROSITE" id="PS51987">
    <property type="entry name" value="GS_CATALYTIC"/>
    <property type="match status" value="1"/>
</dbReference>
<proteinExistence type="inferred from homology"/>
<evidence type="ECO:0000250" key="1"/>
<evidence type="ECO:0000255" key="2">
    <source>
        <dbReference type="PROSITE-ProRule" id="PRU01330"/>
    </source>
</evidence>
<evidence type="ECO:0000255" key="3">
    <source>
        <dbReference type="PROSITE-ProRule" id="PRU01331"/>
    </source>
</evidence>
<evidence type="ECO:0000305" key="4"/>